<sequence>MIGIDIVSIARIEKCVKRFEMRFLERFLSPSEIVLCKDKSSSIAGFFALKEACSKALQVGIGKELSFLDMRISKSPKNAPLITLSKEKMDYFNIQSLSASISHDAGFAIAVVMVSSSNL</sequence>
<accession>Q9ZL36</accession>
<dbReference type="EC" id="2.7.8.7" evidence="1"/>
<dbReference type="EMBL" id="AE001439">
    <property type="protein sequence ID" value="AAD06316.1"/>
    <property type="molecule type" value="Genomic_DNA"/>
</dbReference>
<dbReference type="PIR" id="G71894">
    <property type="entry name" value="G71894"/>
</dbReference>
<dbReference type="RefSeq" id="WP_000579160.1">
    <property type="nucleotide sequence ID" value="NC_000921.1"/>
</dbReference>
<dbReference type="SMR" id="Q9ZL36"/>
<dbReference type="KEGG" id="hpj:jhp_0744"/>
<dbReference type="PATRIC" id="fig|85963.30.peg.232"/>
<dbReference type="eggNOG" id="COG0736">
    <property type="taxonomic scope" value="Bacteria"/>
</dbReference>
<dbReference type="Proteomes" id="UP000000804">
    <property type="component" value="Chromosome"/>
</dbReference>
<dbReference type="GO" id="GO:0005737">
    <property type="term" value="C:cytoplasm"/>
    <property type="evidence" value="ECO:0007669"/>
    <property type="project" value="UniProtKB-SubCell"/>
</dbReference>
<dbReference type="GO" id="GO:0008897">
    <property type="term" value="F:holo-[acyl-carrier-protein] synthase activity"/>
    <property type="evidence" value="ECO:0007669"/>
    <property type="project" value="UniProtKB-UniRule"/>
</dbReference>
<dbReference type="GO" id="GO:0000287">
    <property type="term" value="F:magnesium ion binding"/>
    <property type="evidence" value="ECO:0007669"/>
    <property type="project" value="UniProtKB-UniRule"/>
</dbReference>
<dbReference type="GO" id="GO:0006633">
    <property type="term" value="P:fatty acid biosynthetic process"/>
    <property type="evidence" value="ECO:0007669"/>
    <property type="project" value="UniProtKB-UniRule"/>
</dbReference>
<dbReference type="Gene3D" id="3.90.470.20">
    <property type="entry name" value="4'-phosphopantetheinyl transferase domain"/>
    <property type="match status" value="1"/>
</dbReference>
<dbReference type="HAMAP" id="MF_00101">
    <property type="entry name" value="AcpS"/>
    <property type="match status" value="1"/>
</dbReference>
<dbReference type="InterPro" id="IPR008278">
    <property type="entry name" value="4-PPantetheinyl_Trfase_dom"/>
</dbReference>
<dbReference type="InterPro" id="IPR037143">
    <property type="entry name" value="4-PPantetheinyl_Trfase_dom_sf"/>
</dbReference>
<dbReference type="InterPro" id="IPR002582">
    <property type="entry name" value="ACPS"/>
</dbReference>
<dbReference type="InterPro" id="IPR004568">
    <property type="entry name" value="Ppantetheine-prot_Trfase_dom"/>
</dbReference>
<dbReference type="NCBIfam" id="TIGR00516">
    <property type="entry name" value="acpS"/>
    <property type="match status" value="1"/>
</dbReference>
<dbReference type="NCBIfam" id="TIGR00556">
    <property type="entry name" value="pantethn_trn"/>
    <property type="match status" value="1"/>
</dbReference>
<dbReference type="Pfam" id="PF01648">
    <property type="entry name" value="ACPS"/>
    <property type="match status" value="1"/>
</dbReference>
<dbReference type="SUPFAM" id="SSF56214">
    <property type="entry name" value="4'-phosphopantetheinyl transferase"/>
    <property type="match status" value="1"/>
</dbReference>
<organism>
    <name type="scientific">Helicobacter pylori (strain J99 / ATCC 700824)</name>
    <name type="common">Campylobacter pylori J99</name>
    <dbReference type="NCBI Taxonomy" id="85963"/>
    <lineage>
        <taxon>Bacteria</taxon>
        <taxon>Pseudomonadati</taxon>
        <taxon>Campylobacterota</taxon>
        <taxon>Epsilonproteobacteria</taxon>
        <taxon>Campylobacterales</taxon>
        <taxon>Helicobacteraceae</taxon>
        <taxon>Helicobacter</taxon>
    </lineage>
</organism>
<keyword id="KW-0963">Cytoplasm</keyword>
<keyword id="KW-0275">Fatty acid biosynthesis</keyword>
<keyword id="KW-0276">Fatty acid metabolism</keyword>
<keyword id="KW-0444">Lipid biosynthesis</keyword>
<keyword id="KW-0443">Lipid metabolism</keyword>
<keyword id="KW-0460">Magnesium</keyword>
<keyword id="KW-0479">Metal-binding</keyword>
<keyword id="KW-0808">Transferase</keyword>
<reference key="1">
    <citation type="journal article" date="1999" name="Nature">
        <title>Genomic sequence comparison of two unrelated isolates of the human gastric pathogen Helicobacter pylori.</title>
        <authorList>
            <person name="Alm R.A."/>
            <person name="Ling L.-S.L."/>
            <person name="Moir D.T."/>
            <person name="King B.L."/>
            <person name="Brown E.D."/>
            <person name="Doig P.C."/>
            <person name="Smith D.R."/>
            <person name="Noonan B."/>
            <person name="Guild B.C."/>
            <person name="deJonge B.L."/>
            <person name="Carmel G."/>
            <person name="Tummino P.J."/>
            <person name="Caruso A."/>
            <person name="Uria-Nickelsen M."/>
            <person name="Mills D.M."/>
            <person name="Ives C."/>
            <person name="Gibson R."/>
            <person name="Merberg D."/>
            <person name="Mills S.D."/>
            <person name="Jiang Q."/>
            <person name="Taylor D.E."/>
            <person name="Vovis G.F."/>
            <person name="Trust T.J."/>
        </authorList>
    </citation>
    <scope>NUCLEOTIDE SEQUENCE [LARGE SCALE GENOMIC DNA]</scope>
    <source>
        <strain>J99 / ATCC 700824</strain>
    </source>
</reference>
<name>ACPS_HELPJ</name>
<gene>
    <name evidence="1" type="primary">acpS</name>
    <name type="ordered locus">jhp_0744</name>
</gene>
<feature type="chain" id="PRO_0000175654" description="Holo-[acyl-carrier-protein] synthase">
    <location>
        <begin position="1"/>
        <end position="119"/>
    </location>
</feature>
<feature type="binding site" evidence="1">
    <location>
        <position position="5"/>
    </location>
    <ligand>
        <name>Mg(2+)</name>
        <dbReference type="ChEBI" id="CHEBI:18420"/>
    </ligand>
</feature>
<feature type="binding site" evidence="1">
    <location>
        <position position="51"/>
    </location>
    <ligand>
        <name>Mg(2+)</name>
        <dbReference type="ChEBI" id="CHEBI:18420"/>
    </ligand>
</feature>
<comment type="function">
    <text evidence="1">Transfers the 4'-phosphopantetheine moiety from coenzyme A to a Ser of acyl-carrier-protein.</text>
</comment>
<comment type="catalytic activity">
    <reaction evidence="1">
        <text>apo-[ACP] + CoA = holo-[ACP] + adenosine 3',5'-bisphosphate + H(+)</text>
        <dbReference type="Rhea" id="RHEA:12068"/>
        <dbReference type="Rhea" id="RHEA-COMP:9685"/>
        <dbReference type="Rhea" id="RHEA-COMP:9690"/>
        <dbReference type="ChEBI" id="CHEBI:15378"/>
        <dbReference type="ChEBI" id="CHEBI:29999"/>
        <dbReference type="ChEBI" id="CHEBI:57287"/>
        <dbReference type="ChEBI" id="CHEBI:58343"/>
        <dbReference type="ChEBI" id="CHEBI:64479"/>
        <dbReference type="EC" id="2.7.8.7"/>
    </reaction>
</comment>
<comment type="cofactor">
    <cofactor evidence="1">
        <name>Mg(2+)</name>
        <dbReference type="ChEBI" id="CHEBI:18420"/>
    </cofactor>
</comment>
<comment type="subcellular location">
    <subcellularLocation>
        <location evidence="1">Cytoplasm</location>
    </subcellularLocation>
</comment>
<comment type="similarity">
    <text evidence="1">Belongs to the P-Pant transferase superfamily. AcpS family.</text>
</comment>
<evidence type="ECO:0000255" key="1">
    <source>
        <dbReference type="HAMAP-Rule" id="MF_00101"/>
    </source>
</evidence>
<proteinExistence type="inferred from homology"/>
<protein>
    <recommendedName>
        <fullName evidence="1">Holo-[acyl-carrier-protein] synthase</fullName>
        <shortName evidence="1">Holo-ACP synthase</shortName>
        <ecNumber evidence="1">2.7.8.7</ecNumber>
    </recommendedName>
    <alternativeName>
        <fullName evidence="1">4'-phosphopantetheinyl transferase AcpS</fullName>
    </alternativeName>
</protein>